<gene>
    <name type="ordered locus">HPAG1_0235</name>
</gene>
<keyword id="KW-1003">Cell membrane</keyword>
<keyword id="KW-0449">Lipoprotein</keyword>
<keyword id="KW-0472">Membrane</keyword>
<keyword id="KW-0564">Palmitate</keyword>
<keyword id="KW-0732">Signal</keyword>
<reference key="1">
    <citation type="journal article" date="2006" name="Proc. Natl. Acad. Sci. U.S.A.">
        <title>The complete genome sequence of a chronic atrophic gastritis Helicobacter pylori strain: evolution during disease progression.</title>
        <authorList>
            <person name="Oh J.D."/>
            <person name="Kling-Baeckhed H."/>
            <person name="Giannakis M."/>
            <person name="Xu J."/>
            <person name="Fulton R.S."/>
            <person name="Fulton L.A."/>
            <person name="Cordum H.S."/>
            <person name="Wang C."/>
            <person name="Elliott G."/>
            <person name="Edwards J."/>
            <person name="Mardis E.R."/>
            <person name="Engstrand L.G."/>
            <person name="Gordon J.I."/>
        </authorList>
    </citation>
    <scope>NUCLEOTIDE SEQUENCE [LARGE SCALE GENOMIC DNA]</scope>
    <source>
        <strain>HPAG1</strain>
    </source>
</reference>
<evidence type="ECO:0000255" key="1">
    <source>
        <dbReference type="HAMAP-Rule" id="MF_01421"/>
    </source>
</evidence>
<evidence type="ECO:0000256" key="2">
    <source>
        <dbReference type="SAM" id="MobiDB-lite"/>
    </source>
</evidence>
<comment type="subcellular location">
    <subcellularLocation>
        <location evidence="1">Cell membrane</location>
        <topology evidence="1">Lipid-anchor</topology>
    </subcellularLocation>
</comment>
<comment type="similarity">
    <text evidence="1">Belongs to the UPF0323 family.</text>
</comment>
<name>Y235_HELPH</name>
<protein>
    <recommendedName>
        <fullName evidence="1">UPF0323 lipoprotein HPAG1_0235</fullName>
    </recommendedName>
</protein>
<feature type="signal peptide" evidence="1">
    <location>
        <begin position="1"/>
        <end position="27"/>
    </location>
</feature>
<feature type="chain" id="PRO_1000024298" description="UPF0323 lipoprotein HPAG1_0235">
    <location>
        <begin position="28"/>
        <end position="216"/>
    </location>
</feature>
<feature type="region of interest" description="Disordered" evidence="2">
    <location>
        <begin position="159"/>
        <end position="216"/>
    </location>
</feature>
<feature type="compositionally biased region" description="Polar residues" evidence="2">
    <location>
        <begin position="159"/>
        <end position="196"/>
    </location>
</feature>
<feature type="compositionally biased region" description="Low complexity" evidence="2">
    <location>
        <begin position="198"/>
        <end position="209"/>
    </location>
</feature>
<feature type="lipid moiety-binding region" description="N-palmitoyl cysteine" evidence="1">
    <location>
        <position position="28"/>
    </location>
</feature>
<feature type="lipid moiety-binding region" description="S-diacylglycerol cysteine" evidence="1">
    <location>
        <position position="28"/>
    </location>
</feature>
<sequence>MKKPYRKISDYAIVGGLSALVMVSIVGCKSNADDKPKEQSSLSQSVQKGAFVILEEQKDKSYKVVEEYPSSRTHIVVRDLQGNERVLSDEEIQKLIKEEEAKIDNGTSKLVQPNNGGGSNEGSGFGLGSAILGSAAGAILGSYIGNKLFNNPNYQQNAQRTYKSPQAYQRSQNSFSKSAPSASGMGTASKGQSGFFGSSRPTSSPAVSSGTRGFNA</sequence>
<proteinExistence type="inferred from homology"/>
<organism>
    <name type="scientific">Helicobacter pylori (strain HPAG1)</name>
    <dbReference type="NCBI Taxonomy" id="357544"/>
    <lineage>
        <taxon>Bacteria</taxon>
        <taxon>Pseudomonadati</taxon>
        <taxon>Campylobacterota</taxon>
        <taxon>Epsilonproteobacteria</taxon>
        <taxon>Campylobacterales</taxon>
        <taxon>Helicobacteraceae</taxon>
        <taxon>Helicobacter</taxon>
    </lineage>
</organism>
<dbReference type="EMBL" id="CP000241">
    <property type="protein sequence ID" value="ABF84302.1"/>
    <property type="molecule type" value="Genomic_DNA"/>
</dbReference>
<dbReference type="RefSeq" id="WP_000743522.1">
    <property type="nucleotide sequence ID" value="NC_008086.1"/>
</dbReference>
<dbReference type="KEGG" id="hpa:HPAG1_0235"/>
<dbReference type="HOGENOM" id="CLU_111520_0_0_7"/>
<dbReference type="GO" id="GO:0005886">
    <property type="term" value="C:plasma membrane"/>
    <property type="evidence" value="ECO:0007669"/>
    <property type="project" value="UniProtKB-SubCell"/>
</dbReference>
<dbReference type="HAMAP" id="MF_01421">
    <property type="entry name" value="UPF0323"/>
    <property type="match status" value="1"/>
</dbReference>
<dbReference type="InterPro" id="IPR020913">
    <property type="entry name" value="UPF0323"/>
</dbReference>
<dbReference type="NCBIfam" id="NF003146">
    <property type="entry name" value="PRK04081.1"/>
    <property type="match status" value="1"/>
</dbReference>
<dbReference type="PROSITE" id="PS51257">
    <property type="entry name" value="PROKAR_LIPOPROTEIN"/>
    <property type="match status" value="1"/>
</dbReference>
<accession>Q1CUS0</accession>